<protein>
    <recommendedName>
        <fullName evidence="1">Photosystem II reaction center protein Z</fullName>
        <shortName evidence="1">PSII-Z</shortName>
    </recommendedName>
</protein>
<name>PSBZ_MESVI</name>
<sequence length="62" mass="6645">MLAAFQLTVLALIATSFLMVIGVPVIFASPEGWVKSKNFVFSGALLWISLVFAVGILNSFVV</sequence>
<organism>
    <name type="scientific">Mesostigma viride</name>
    <name type="common">Green alga</name>
    <dbReference type="NCBI Taxonomy" id="41882"/>
    <lineage>
        <taxon>Eukaryota</taxon>
        <taxon>Viridiplantae</taxon>
        <taxon>Streptophyta</taxon>
        <taxon>Mesostigmatophyceae</taxon>
        <taxon>Mesostigmatales</taxon>
        <taxon>Mesostigmataceae</taxon>
        <taxon>Mesostigma</taxon>
    </lineage>
</organism>
<gene>
    <name evidence="1" type="primary">psbZ</name>
    <name type="synonym">ycf9</name>
</gene>
<proteinExistence type="inferred from homology"/>
<keyword id="KW-0150">Chloroplast</keyword>
<keyword id="KW-0472">Membrane</keyword>
<keyword id="KW-0602">Photosynthesis</keyword>
<keyword id="KW-0604">Photosystem II</keyword>
<keyword id="KW-0934">Plastid</keyword>
<keyword id="KW-0674">Reaction center</keyword>
<keyword id="KW-0793">Thylakoid</keyword>
<keyword id="KW-0812">Transmembrane</keyword>
<keyword id="KW-1133">Transmembrane helix</keyword>
<reference key="1">
    <citation type="journal article" date="2000" name="Nature">
        <title>Ancestral chloroplast genome in Mesostigma viride reveals an early branch of green plant evolution.</title>
        <authorList>
            <person name="Lemieux C."/>
            <person name="Otis C."/>
            <person name="Turmel M."/>
        </authorList>
    </citation>
    <scope>NUCLEOTIDE SEQUENCE [LARGE SCALE GENOMIC DNA]</scope>
    <source>
        <strain>NIES-296 / KY-14 / CCMP 2046</strain>
    </source>
</reference>
<comment type="function">
    <text evidence="1">May control the interaction of photosystem II (PSII) cores with the light-harvesting antenna, regulates electron flow through the 2 photosystem reaction centers. PSII is a light-driven water plastoquinone oxidoreductase, using light energy to abstract electrons from H(2)O, generating a proton gradient subsequently used for ATP formation.</text>
</comment>
<comment type="subunit">
    <text evidence="1">PSII is composed of 1 copy each of membrane proteins PsbA, PsbB, PsbC, PsbD, PsbE, PsbF, PsbH, PsbI, PsbJ, PsbK, PsbL, PsbM, PsbT, PsbY, PsbZ, Psb30/Ycf12, at least 3 peripheral proteins of the oxygen-evolving complex and a large number of cofactors. It forms dimeric complexes.</text>
</comment>
<comment type="subcellular location">
    <subcellularLocation>
        <location evidence="1">Plastid</location>
        <location evidence="1">Chloroplast thylakoid membrane</location>
        <topology evidence="1">Multi-pass membrane protein</topology>
    </subcellularLocation>
</comment>
<comment type="similarity">
    <text evidence="1">Belongs to the PsbZ family.</text>
</comment>
<accession>Q9MUP9</accession>
<geneLocation type="chloroplast"/>
<feature type="chain" id="PRO_0000217714" description="Photosystem II reaction center protein Z">
    <location>
        <begin position="1"/>
        <end position="62"/>
    </location>
</feature>
<feature type="transmembrane region" description="Helical" evidence="1">
    <location>
        <begin position="8"/>
        <end position="28"/>
    </location>
</feature>
<feature type="transmembrane region" description="Helical" evidence="1">
    <location>
        <begin position="41"/>
        <end position="61"/>
    </location>
</feature>
<evidence type="ECO:0000255" key="1">
    <source>
        <dbReference type="HAMAP-Rule" id="MF_00644"/>
    </source>
</evidence>
<dbReference type="EMBL" id="AF166114">
    <property type="protein sequence ID" value="AAF43851.1"/>
    <property type="molecule type" value="Genomic_DNA"/>
</dbReference>
<dbReference type="RefSeq" id="NP_038411.1">
    <property type="nucleotide sequence ID" value="NC_002186.1"/>
</dbReference>
<dbReference type="SMR" id="Q9MUP9"/>
<dbReference type="GeneID" id="800918"/>
<dbReference type="GO" id="GO:0009535">
    <property type="term" value="C:chloroplast thylakoid membrane"/>
    <property type="evidence" value="ECO:0007669"/>
    <property type="project" value="UniProtKB-SubCell"/>
</dbReference>
<dbReference type="GO" id="GO:0009539">
    <property type="term" value="C:photosystem II reaction center"/>
    <property type="evidence" value="ECO:0007669"/>
    <property type="project" value="InterPro"/>
</dbReference>
<dbReference type="GO" id="GO:0015979">
    <property type="term" value="P:photosynthesis"/>
    <property type="evidence" value="ECO:0007669"/>
    <property type="project" value="UniProtKB-UniRule"/>
</dbReference>
<dbReference type="GO" id="GO:0042549">
    <property type="term" value="P:photosystem II stabilization"/>
    <property type="evidence" value="ECO:0007669"/>
    <property type="project" value="InterPro"/>
</dbReference>
<dbReference type="Gene3D" id="1.10.287.740">
    <property type="entry name" value="Photosystem II PsbZ, reaction centre"/>
    <property type="match status" value="1"/>
</dbReference>
<dbReference type="HAMAP" id="MF_00644">
    <property type="entry name" value="PSII_PsbZ"/>
    <property type="match status" value="1"/>
</dbReference>
<dbReference type="InterPro" id="IPR002644">
    <property type="entry name" value="PSII_PsbZ"/>
</dbReference>
<dbReference type="InterPro" id="IPR036512">
    <property type="entry name" value="PSII_PsbZ_sf"/>
</dbReference>
<dbReference type="NCBIfam" id="TIGR03043">
    <property type="entry name" value="PS_II_psbZ"/>
    <property type="match status" value="1"/>
</dbReference>
<dbReference type="PANTHER" id="PTHR34971">
    <property type="entry name" value="PHOTOSYSTEM II REACTION CENTER PROTEIN Z"/>
    <property type="match status" value="1"/>
</dbReference>
<dbReference type="PANTHER" id="PTHR34971:SF2">
    <property type="entry name" value="PHOTOSYSTEM II REACTION CENTER PROTEIN Z"/>
    <property type="match status" value="1"/>
</dbReference>
<dbReference type="Pfam" id="PF01737">
    <property type="entry name" value="Ycf9"/>
    <property type="match status" value="1"/>
</dbReference>
<dbReference type="SUPFAM" id="SSF161055">
    <property type="entry name" value="PsbZ-like"/>
    <property type="match status" value="1"/>
</dbReference>